<proteinExistence type="inferred from homology"/>
<feature type="chain" id="PRO_0000327521" description="Probable arginine--tRNA ligase, cytoplasmic">
    <location>
        <begin position="1"/>
        <end position="589"/>
    </location>
</feature>
<feature type="region of interest" description="Interaction with tRNA" evidence="2">
    <location>
        <begin position="469"/>
        <end position="483"/>
    </location>
</feature>
<feature type="short sequence motif" description="'HIGH' region">
    <location>
        <begin position="121"/>
        <end position="132"/>
    </location>
</feature>
<feature type="binding site" evidence="1">
    <location>
        <begin position="121"/>
        <end position="123"/>
    </location>
    <ligand>
        <name>L-arginine</name>
        <dbReference type="ChEBI" id="CHEBI:32682"/>
    </ligand>
</feature>
<feature type="binding site" evidence="1">
    <location>
        <position position="132"/>
    </location>
    <ligand>
        <name>L-arginine</name>
        <dbReference type="ChEBI" id="CHEBI:32682"/>
    </ligand>
</feature>
<feature type="binding site" evidence="1">
    <location>
        <position position="332"/>
    </location>
    <ligand>
        <name>L-arginine</name>
        <dbReference type="ChEBI" id="CHEBI:32682"/>
    </ligand>
</feature>
<feature type="binding site" evidence="1">
    <location>
        <position position="336"/>
    </location>
    <ligand>
        <name>L-arginine</name>
        <dbReference type="ChEBI" id="CHEBI:32682"/>
    </ligand>
</feature>
<feature type="binding site" evidence="1">
    <location>
        <position position="360"/>
    </location>
    <ligand>
        <name>L-arginine</name>
        <dbReference type="ChEBI" id="CHEBI:32682"/>
    </ligand>
</feature>
<sequence length="589" mass="67044">MFQEEIAKQLSVLTEIEANKILECIESTKNKDMADFAVPIPKLNKFKKLVGKPDQLAIDFASKIQLNDCIQGASATGNYLNFKVNRLLQVQEILKEVINQKEKYGMTEQGKGKKVIVEFSSPNIAKPFHAGHLRSTIIGNFMVNLFNELAYETVSMNYLGDWGKQYGLLAVGFEKYGSEEELLADPIKHLYNVYVQINGEAEKEEEAKKKYAEEIAAGVEPTAPLQTTPTIHDTARAYFKRMEDGDAEALAIWKRFRDLSIVKYKDIYNRLNVKFDIYAGESLVTEGMTIEFKKLQDKNLLEDSQGAKVIDLSKPNKLGKVLVQKTDGTTLYITRDIAAAVDRKNNIGFDKMYYVVASQQDFHFRQLFDILGKMDYQWQKDLTHINYGMVKGMSTRKGTVVFLEDILNKTQKKMLKIMKQNEQKFAEIEDPEKVADIVGLSAVVIQDFNAKRNKDYDFNWDRMLKSDGDTGPYLQYAHARLCSLERKSGFEFNPNANLSLLSEPEAFNLAITIGRYPEIIQLTHNQLEPSTLVGYLFELAHAVSSAHQVLWIKDREKDVAEARFVLYWAAKVILGSGLRILGLVPLERM</sequence>
<evidence type="ECO:0000250" key="1">
    <source>
        <dbReference type="UniProtKB" id="P54136"/>
    </source>
</evidence>
<evidence type="ECO:0000250" key="2">
    <source>
        <dbReference type="UniProtKB" id="Q05506"/>
    </source>
</evidence>
<evidence type="ECO:0000305" key="3"/>
<keyword id="KW-0030">Aminoacyl-tRNA synthetase</keyword>
<keyword id="KW-0067">ATP-binding</keyword>
<keyword id="KW-0963">Cytoplasm</keyword>
<keyword id="KW-0436">Ligase</keyword>
<keyword id="KW-0547">Nucleotide-binding</keyword>
<keyword id="KW-0648">Protein biosynthesis</keyword>
<keyword id="KW-1185">Reference proteome</keyword>
<reference key="1">
    <citation type="journal article" date="2002" name="Nature">
        <title>Sequence and analysis of chromosome 2 of Dictyostelium discoideum.</title>
        <authorList>
            <person name="Gloeckner G."/>
            <person name="Eichinger L."/>
            <person name="Szafranski K."/>
            <person name="Pachebat J.A."/>
            <person name="Bankier A.T."/>
            <person name="Dear P.H."/>
            <person name="Lehmann R."/>
            <person name="Baumgart C."/>
            <person name="Parra G."/>
            <person name="Abril J.F."/>
            <person name="Guigo R."/>
            <person name="Kumpf K."/>
            <person name="Tunggal B."/>
            <person name="Cox E.C."/>
            <person name="Quail M.A."/>
            <person name="Platzer M."/>
            <person name="Rosenthal A."/>
            <person name="Noegel A.A."/>
        </authorList>
    </citation>
    <scope>NUCLEOTIDE SEQUENCE [LARGE SCALE GENOMIC DNA]</scope>
    <source>
        <strain>AX4</strain>
    </source>
</reference>
<reference key="2">
    <citation type="journal article" date="2005" name="Nature">
        <title>The genome of the social amoeba Dictyostelium discoideum.</title>
        <authorList>
            <person name="Eichinger L."/>
            <person name="Pachebat J.A."/>
            <person name="Gloeckner G."/>
            <person name="Rajandream M.A."/>
            <person name="Sucgang R."/>
            <person name="Berriman M."/>
            <person name="Song J."/>
            <person name="Olsen R."/>
            <person name="Szafranski K."/>
            <person name="Xu Q."/>
            <person name="Tunggal B."/>
            <person name="Kummerfeld S."/>
            <person name="Madera M."/>
            <person name="Konfortov B.A."/>
            <person name="Rivero F."/>
            <person name="Bankier A.T."/>
            <person name="Lehmann R."/>
            <person name="Hamlin N."/>
            <person name="Davies R."/>
            <person name="Gaudet P."/>
            <person name="Fey P."/>
            <person name="Pilcher K."/>
            <person name="Chen G."/>
            <person name="Saunders D."/>
            <person name="Sodergren E.J."/>
            <person name="Davis P."/>
            <person name="Kerhornou A."/>
            <person name="Nie X."/>
            <person name="Hall N."/>
            <person name="Anjard C."/>
            <person name="Hemphill L."/>
            <person name="Bason N."/>
            <person name="Farbrother P."/>
            <person name="Desany B."/>
            <person name="Just E."/>
            <person name="Morio T."/>
            <person name="Rost R."/>
            <person name="Churcher C.M."/>
            <person name="Cooper J."/>
            <person name="Haydock S."/>
            <person name="van Driessche N."/>
            <person name="Cronin A."/>
            <person name="Goodhead I."/>
            <person name="Muzny D.M."/>
            <person name="Mourier T."/>
            <person name="Pain A."/>
            <person name="Lu M."/>
            <person name="Harper D."/>
            <person name="Lindsay R."/>
            <person name="Hauser H."/>
            <person name="James K.D."/>
            <person name="Quiles M."/>
            <person name="Madan Babu M."/>
            <person name="Saito T."/>
            <person name="Buchrieser C."/>
            <person name="Wardroper A."/>
            <person name="Felder M."/>
            <person name="Thangavelu M."/>
            <person name="Johnson D."/>
            <person name="Knights A."/>
            <person name="Loulseged H."/>
            <person name="Mungall K.L."/>
            <person name="Oliver K."/>
            <person name="Price C."/>
            <person name="Quail M.A."/>
            <person name="Urushihara H."/>
            <person name="Hernandez J."/>
            <person name="Rabbinowitsch E."/>
            <person name="Steffen D."/>
            <person name="Sanders M."/>
            <person name="Ma J."/>
            <person name="Kohara Y."/>
            <person name="Sharp S."/>
            <person name="Simmonds M.N."/>
            <person name="Spiegler S."/>
            <person name="Tivey A."/>
            <person name="Sugano S."/>
            <person name="White B."/>
            <person name="Walker D."/>
            <person name="Woodward J.R."/>
            <person name="Winckler T."/>
            <person name="Tanaka Y."/>
            <person name="Shaulsky G."/>
            <person name="Schleicher M."/>
            <person name="Weinstock G.M."/>
            <person name="Rosenthal A."/>
            <person name="Cox E.C."/>
            <person name="Chisholm R.L."/>
            <person name="Gibbs R.A."/>
            <person name="Loomis W.F."/>
            <person name="Platzer M."/>
            <person name="Kay R.R."/>
            <person name="Williams J.G."/>
            <person name="Dear P.H."/>
            <person name="Noegel A.A."/>
            <person name="Barrell B.G."/>
            <person name="Kuspa A."/>
        </authorList>
    </citation>
    <scope>NUCLEOTIDE SEQUENCE [LARGE SCALE GENOMIC DNA]</scope>
    <source>
        <strain>AX4</strain>
    </source>
</reference>
<comment type="function">
    <text evidence="1">Forms part of a macromolecular complex that catalyzes the attachment of specific amino acids to cognate tRNAs during protein synthesis.</text>
</comment>
<comment type="catalytic activity">
    <reaction evidence="1">
        <text>tRNA(Arg) + L-arginine + ATP = L-arginyl-tRNA(Arg) + AMP + diphosphate</text>
        <dbReference type="Rhea" id="RHEA:20301"/>
        <dbReference type="Rhea" id="RHEA-COMP:9658"/>
        <dbReference type="Rhea" id="RHEA-COMP:9673"/>
        <dbReference type="ChEBI" id="CHEBI:30616"/>
        <dbReference type="ChEBI" id="CHEBI:32682"/>
        <dbReference type="ChEBI" id="CHEBI:33019"/>
        <dbReference type="ChEBI" id="CHEBI:78442"/>
        <dbReference type="ChEBI" id="CHEBI:78513"/>
        <dbReference type="ChEBI" id="CHEBI:456215"/>
        <dbReference type="EC" id="6.1.1.19"/>
    </reaction>
</comment>
<comment type="subcellular location">
    <subcellularLocation>
        <location evidence="1">Cytoplasm</location>
    </subcellularLocation>
    <subcellularLocation>
        <location evidence="1">Cytoplasm</location>
        <location evidence="1">Cytosol</location>
    </subcellularLocation>
</comment>
<comment type="similarity">
    <text evidence="3">Belongs to the class-I aminoacyl-tRNA synthetase family.</text>
</comment>
<dbReference type="EC" id="6.1.1.19" evidence="1"/>
<dbReference type="EMBL" id="AAFI02000008">
    <property type="protein sequence ID" value="EAL71071.1"/>
    <property type="molecule type" value="Genomic_DNA"/>
</dbReference>
<dbReference type="RefSeq" id="XP_644926.1">
    <property type="nucleotide sequence ID" value="XM_639834.1"/>
</dbReference>
<dbReference type="SMR" id="Q558Z0"/>
<dbReference type="FunCoup" id="Q558Z0">
    <property type="interactions" value="396"/>
</dbReference>
<dbReference type="STRING" id="44689.Q558Z0"/>
<dbReference type="GlyGen" id="Q558Z0">
    <property type="glycosylation" value="1 site"/>
</dbReference>
<dbReference type="PaxDb" id="44689-DDB0231324"/>
<dbReference type="EnsemblProtists" id="EAL71071">
    <property type="protein sequence ID" value="EAL71071"/>
    <property type="gene ID" value="DDB_G0272867"/>
</dbReference>
<dbReference type="GeneID" id="8618605"/>
<dbReference type="KEGG" id="ddi:DDB_G0272867"/>
<dbReference type="dictyBase" id="DDB_G0272867">
    <property type="gene designation" value="argS1"/>
</dbReference>
<dbReference type="VEuPathDB" id="AmoebaDB:DDB_G0272867"/>
<dbReference type="eggNOG" id="KOG1195">
    <property type="taxonomic scope" value="Eukaryota"/>
</dbReference>
<dbReference type="HOGENOM" id="CLU_006406_6_2_1"/>
<dbReference type="InParanoid" id="Q558Z0"/>
<dbReference type="OMA" id="YEFKWER"/>
<dbReference type="PhylomeDB" id="Q558Z0"/>
<dbReference type="PRO" id="PR:Q558Z0"/>
<dbReference type="Proteomes" id="UP000002195">
    <property type="component" value="Chromosome 2"/>
</dbReference>
<dbReference type="GO" id="GO:0005829">
    <property type="term" value="C:cytosol"/>
    <property type="evidence" value="ECO:0007669"/>
    <property type="project" value="UniProtKB-SubCell"/>
</dbReference>
<dbReference type="GO" id="GO:0005739">
    <property type="term" value="C:mitochondrion"/>
    <property type="evidence" value="ECO:0000318"/>
    <property type="project" value="GO_Central"/>
</dbReference>
<dbReference type="GO" id="GO:0045335">
    <property type="term" value="C:phagocytic vesicle"/>
    <property type="evidence" value="ECO:0007005"/>
    <property type="project" value="dictyBase"/>
</dbReference>
<dbReference type="GO" id="GO:0004814">
    <property type="term" value="F:arginine-tRNA ligase activity"/>
    <property type="evidence" value="ECO:0000318"/>
    <property type="project" value="GO_Central"/>
</dbReference>
<dbReference type="GO" id="GO:0005524">
    <property type="term" value="F:ATP binding"/>
    <property type="evidence" value="ECO:0007669"/>
    <property type="project" value="UniProtKB-KW"/>
</dbReference>
<dbReference type="GO" id="GO:0006420">
    <property type="term" value="P:arginyl-tRNA aminoacylation"/>
    <property type="evidence" value="ECO:0000318"/>
    <property type="project" value="GO_Central"/>
</dbReference>
<dbReference type="GO" id="GO:0032543">
    <property type="term" value="P:mitochondrial translation"/>
    <property type="evidence" value="ECO:0000318"/>
    <property type="project" value="GO_Central"/>
</dbReference>
<dbReference type="CDD" id="cd07956">
    <property type="entry name" value="Anticodon_Ia_Arg"/>
    <property type="match status" value="1"/>
</dbReference>
<dbReference type="CDD" id="cd00671">
    <property type="entry name" value="ArgRS_core"/>
    <property type="match status" value="1"/>
</dbReference>
<dbReference type="FunFam" id="1.10.730.10:FF:000006">
    <property type="entry name" value="Arginyl-tRNA synthetase 2, mitochondrial"/>
    <property type="match status" value="1"/>
</dbReference>
<dbReference type="FunFam" id="3.40.50.620:FF:000058">
    <property type="entry name" value="Mitochondrial arginyl-tRNA synthetase"/>
    <property type="match status" value="1"/>
</dbReference>
<dbReference type="Gene3D" id="3.30.1360.70">
    <property type="entry name" value="Arginyl tRNA synthetase N-terminal domain"/>
    <property type="match status" value="1"/>
</dbReference>
<dbReference type="Gene3D" id="3.40.50.620">
    <property type="entry name" value="HUPs"/>
    <property type="match status" value="1"/>
</dbReference>
<dbReference type="Gene3D" id="1.10.730.10">
    <property type="entry name" value="Isoleucyl-tRNA Synthetase, Domain 1"/>
    <property type="match status" value="1"/>
</dbReference>
<dbReference type="HAMAP" id="MF_00123">
    <property type="entry name" value="Arg_tRNA_synth"/>
    <property type="match status" value="1"/>
</dbReference>
<dbReference type="InterPro" id="IPR001412">
    <property type="entry name" value="aa-tRNA-synth_I_CS"/>
</dbReference>
<dbReference type="InterPro" id="IPR001278">
    <property type="entry name" value="Arg-tRNA-ligase"/>
</dbReference>
<dbReference type="InterPro" id="IPR005148">
    <property type="entry name" value="Arg-tRNA-synth_N"/>
</dbReference>
<dbReference type="InterPro" id="IPR036695">
    <property type="entry name" value="Arg-tRNA-synth_N_sf"/>
</dbReference>
<dbReference type="InterPro" id="IPR035684">
    <property type="entry name" value="ArgRS_core"/>
</dbReference>
<dbReference type="InterPro" id="IPR008909">
    <property type="entry name" value="DALR_anticod-bd"/>
</dbReference>
<dbReference type="InterPro" id="IPR014729">
    <property type="entry name" value="Rossmann-like_a/b/a_fold"/>
</dbReference>
<dbReference type="InterPro" id="IPR009080">
    <property type="entry name" value="tRNAsynth_Ia_anticodon-bd"/>
</dbReference>
<dbReference type="NCBIfam" id="TIGR00456">
    <property type="entry name" value="argS"/>
    <property type="match status" value="1"/>
</dbReference>
<dbReference type="PANTHER" id="PTHR11956:SF11">
    <property type="entry name" value="ARGININE--TRNA LIGASE, MITOCHONDRIAL-RELATED"/>
    <property type="match status" value="1"/>
</dbReference>
<dbReference type="PANTHER" id="PTHR11956">
    <property type="entry name" value="ARGINYL-TRNA SYNTHETASE"/>
    <property type="match status" value="1"/>
</dbReference>
<dbReference type="Pfam" id="PF03485">
    <property type="entry name" value="Arg_tRNA_synt_N"/>
    <property type="match status" value="1"/>
</dbReference>
<dbReference type="Pfam" id="PF05746">
    <property type="entry name" value="DALR_1"/>
    <property type="match status" value="1"/>
</dbReference>
<dbReference type="Pfam" id="PF00750">
    <property type="entry name" value="tRNA-synt_1d"/>
    <property type="match status" value="1"/>
</dbReference>
<dbReference type="PRINTS" id="PR01038">
    <property type="entry name" value="TRNASYNTHARG"/>
</dbReference>
<dbReference type="SMART" id="SM01016">
    <property type="entry name" value="Arg_tRNA_synt_N"/>
    <property type="match status" value="1"/>
</dbReference>
<dbReference type="SMART" id="SM00836">
    <property type="entry name" value="DALR_1"/>
    <property type="match status" value="1"/>
</dbReference>
<dbReference type="SUPFAM" id="SSF47323">
    <property type="entry name" value="Anticodon-binding domain of a subclass of class I aminoacyl-tRNA synthetases"/>
    <property type="match status" value="1"/>
</dbReference>
<dbReference type="SUPFAM" id="SSF55190">
    <property type="entry name" value="Arginyl-tRNA synthetase (ArgRS), N-terminal 'additional' domain"/>
    <property type="match status" value="1"/>
</dbReference>
<dbReference type="SUPFAM" id="SSF52374">
    <property type="entry name" value="Nucleotidylyl transferase"/>
    <property type="match status" value="1"/>
</dbReference>
<dbReference type="PROSITE" id="PS00178">
    <property type="entry name" value="AA_TRNA_LIGASE_I"/>
    <property type="match status" value="1"/>
</dbReference>
<name>SYRC_DICDI</name>
<organism>
    <name type="scientific">Dictyostelium discoideum</name>
    <name type="common">Social amoeba</name>
    <dbReference type="NCBI Taxonomy" id="44689"/>
    <lineage>
        <taxon>Eukaryota</taxon>
        <taxon>Amoebozoa</taxon>
        <taxon>Evosea</taxon>
        <taxon>Eumycetozoa</taxon>
        <taxon>Dictyostelia</taxon>
        <taxon>Dictyosteliales</taxon>
        <taxon>Dictyosteliaceae</taxon>
        <taxon>Dictyostelium</taxon>
    </lineage>
</organism>
<accession>Q558Z0</accession>
<gene>
    <name type="primary">argS1</name>
    <name type="synonym">argS</name>
    <name type="ORF">DDB_G0272867</name>
</gene>
<protein>
    <recommendedName>
        <fullName>Probable arginine--tRNA ligase, cytoplasmic</fullName>
        <ecNumber evidence="1">6.1.1.19</ecNumber>
    </recommendedName>
    <alternativeName>
        <fullName>Arginyl-tRNA synthetase</fullName>
        <shortName>ArgRS</shortName>
    </alternativeName>
</protein>